<comment type="function">
    <text evidence="1">Catalyzes a salvage reaction resulting in the formation of AMP, that is energically less costly than de novo synthesis.</text>
</comment>
<comment type="catalytic activity">
    <reaction evidence="1">
        <text>AMP + diphosphate = 5-phospho-alpha-D-ribose 1-diphosphate + adenine</text>
        <dbReference type="Rhea" id="RHEA:16609"/>
        <dbReference type="ChEBI" id="CHEBI:16708"/>
        <dbReference type="ChEBI" id="CHEBI:33019"/>
        <dbReference type="ChEBI" id="CHEBI:58017"/>
        <dbReference type="ChEBI" id="CHEBI:456215"/>
        <dbReference type="EC" id="2.4.2.7"/>
    </reaction>
</comment>
<comment type="pathway">
    <text evidence="1">Purine metabolism; AMP biosynthesis via salvage pathway; AMP from adenine: step 1/1.</text>
</comment>
<comment type="subunit">
    <text evidence="1">Homodimer.</text>
</comment>
<comment type="subcellular location">
    <subcellularLocation>
        <location evidence="1">Cytoplasm</location>
    </subcellularLocation>
</comment>
<comment type="similarity">
    <text evidence="1">Belongs to the purine/pyrimidine phosphoribosyltransferase family.</text>
</comment>
<reference key="1">
    <citation type="journal article" date="2005" name="Genome Res.">
        <title>Coping with cold: the genome of the versatile marine Antarctica bacterium Pseudoalteromonas haloplanktis TAC125.</title>
        <authorList>
            <person name="Medigue C."/>
            <person name="Krin E."/>
            <person name="Pascal G."/>
            <person name="Barbe V."/>
            <person name="Bernsel A."/>
            <person name="Bertin P.N."/>
            <person name="Cheung F."/>
            <person name="Cruveiller S."/>
            <person name="D'Amico S."/>
            <person name="Duilio A."/>
            <person name="Fang G."/>
            <person name="Feller G."/>
            <person name="Ho C."/>
            <person name="Mangenot S."/>
            <person name="Marino G."/>
            <person name="Nilsson J."/>
            <person name="Parrilli E."/>
            <person name="Rocha E.P.C."/>
            <person name="Rouy Z."/>
            <person name="Sekowska A."/>
            <person name="Tutino M.L."/>
            <person name="Vallenet D."/>
            <person name="von Heijne G."/>
            <person name="Danchin A."/>
        </authorList>
    </citation>
    <scope>NUCLEOTIDE SEQUENCE [LARGE SCALE GENOMIC DNA]</scope>
    <source>
        <strain>TAC 125</strain>
    </source>
</reference>
<dbReference type="EC" id="2.4.2.7" evidence="1"/>
<dbReference type="EMBL" id="CR954246">
    <property type="protein sequence ID" value="CAI86275.1"/>
    <property type="molecule type" value="Genomic_DNA"/>
</dbReference>
<dbReference type="SMR" id="Q3IKN5"/>
<dbReference type="STRING" id="326442.PSHAa1200"/>
<dbReference type="KEGG" id="pha:PSHAa1200"/>
<dbReference type="PATRIC" id="fig|326442.8.peg.1154"/>
<dbReference type="eggNOG" id="COG0503">
    <property type="taxonomic scope" value="Bacteria"/>
</dbReference>
<dbReference type="HOGENOM" id="CLU_063339_3_0_6"/>
<dbReference type="BioCyc" id="PHAL326442:PSHA_RS05925-MONOMER"/>
<dbReference type="UniPathway" id="UPA00588">
    <property type="reaction ID" value="UER00646"/>
</dbReference>
<dbReference type="Proteomes" id="UP000006843">
    <property type="component" value="Chromosome I"/>
</dbReference>
<dbReference type="GO" id="GO:0005829">
    <property type="term" value="C:cytosol"/>
    <property type="evidence" value="ECO:0007669"/>
    <property type="project" value="TreeGrafter"/>
</dbReference>
<dbReference type="GO" id="GO:0003999">
    <property type="term" value="F:adenine phosphoribosyltransferase activity"/>
    <property type="evidence" value="ECO:0007669"/>
    <property type="project" value="UniProtKB-UniRule"/>
</dbReference>
<dbReference type="GO" id="GO:0006168">
    <property type="term" value="P:adenine salvage"/>
    <property type="evidence" value="ECO:0007669"/>
    <property type="project" value="InterPro"/>
</dbReference>
<dbReference type="GO" id="GO:0044209">
    <property type="term" value="P:AMP salvage"/>
    <property type="evidence" value="ECO:0007669"/>
    <property type="project" value="UniProtKB-UniRule"/>
</dbReference>
<dbReference type="GO" id="GO:0006166">
    <property type="term" value="P:purine ribonucleoside salvage"/>
    <property type="evidence" value="ECO:0007669"/>
    <property type="project" value="UniProtKB-KW"/>
</dbReference>
<dbReference type="CDD" id="cd06223">
    <property type="entry name" value="PRTases_typeI"/>
    <property type="match status" value="1"/>
</dbReference>
<dbReference type="FunFam" id="3.40.50.2020:FF:000004">
    <property type="entry name" value="Adenine phosphoribosyltransferase"/>
    <property type="match status" value="1"/>
</dbReference>
<dbReference type="Gene3D" id="3.40.50.2020">
    <property type="match status" value="1"/>
</dbReference>
<dbReference type="HAMAP" id="MF_00004">
    <property type="entry name" value="Aden_phosphoribosyltr"/>
    <property type="match status" value="1"/>
</dbReference>
<dbReference type="InterPro" id="IPR005764">
    <property type="entry name" value="Ade_phspho_trans"/>
</dbReference>
<dbReference type="InterPro" id="IPR050120">
    <property type="entry name" value="Adenine_PRTase"/>
</dbReference>
<dbReference type="InterPro" id="IPR000836">
    <property type="entry name" value="PRibTrfase_dom"/>
</dbReference>
<dbReference type="InterPro" id="IPR029057">
    <property type="entry name" value="PRTase-like"/>
</dbReference>
<dbReference type="NCBIfam" id="TIGR01090">
    <property type="entry name" value="apt"/>
    <property type="match status" value="1"/>
</dbReference>
<dbReference type="NCBIfam" id="NF002632">
    <property type="entry name" value="PRK02304.1-1"/>
    <property type="match status" value="1"/>
</dbReference>
<dbReference type="NCBIfam" id="NF002634">
    <property type="entry name" value="PRK02304.1-3"/>
    <property type="match status" value="1"/>
</dbReference>
<dbReference type="NCBIfam" id="NF002636">
    <property type="entry name" value="PRK02304.1-5"/>
    <property type="match status" value="1"/>
</dbReference>
<dbReference type="PANTHER" id="PTHR11776">
    <property type="entry name" value="ADENINE PHOSPHORIBOSYLTRANSFERASE"/>
    <property type="match status" value="1"/>
</dbReference>
<dbReference type="PANTHER" id="PTHR11776:SF7">
    <property type="entry name" value="PHOSPHORIBOSYLTRANSFERASE DOMAIN-CONTAINING PROTEIN"/>
    <property type="match status" value="1"/>
</dbReference>
<dbReference type="Pfam" id="PF00156">
    <property type="entry name" value="Pribosyltran"/>
    <property type="match status" value="1"/>
</dbReference>
<dbReference type="SUPFAM" id="SSF53271">
    <property type="entry name" value="PRTase-like"/>
    <property type="match status" value="1"/>
</dbReference>
<dbReference type="PROSITE" id="PS00103">
    <property type="entry name" value="PUR_PYR_PR_TRANSFER"/>
    <property type="match status" value="1"/>
</dbReference>
<name>APT_PSET1</name>
<evidence type="ECO:0000255" key="1">
    <source>
        <dbReference type="HAMAP-Rule" id="MF_00004"/>
    </source>
</evidence>
<feature type="chain" id="PRO_0000321387" description="Adenine phosphoribosyltransferase">
    <location>
        <begin position="1"/>
        <end position="181"/>
    </location>
</feature>
<organism>
    <name type="scientific">Pseudoalteromonas translucida (strain TAC 125)</name>
    <dbReference type="NCBI Taxonomy" id="326442"/>
    <lineage>
        <taxon>Bacteria</taxon>
        <taxon>Pseudomonadati</taxon>
        <taxon>Pseudomonadota</taxon>
        <taxon>Gammaproteobacteria</taxon>
        <taxon>Alteromonadales</taxon>
        <taxon>Pseudoalteromonadaceae</taxon>
        <taxon>Pseudoalteromonas</taxon>
    </lineage>
</organism>
<sequence length="181" mass="19570">MTQVTPAIIKNSITTIADYPKAGIMFRDVTTLMANPDAFKATIDAFIAAYKDQGFTKIIGTESRGFIFGAPLSYALGIPFIPVRKPGKLPREVVRQDYLLEYGEDTLELHVDAIVPGDKVLLVDDLLATGGTIEATIKLVQKLGGEATDAAFVVSLPELGGEKRIAKMGIKILKLVEFEGE</sequence>
<proteinExistence type="inferred from homology"/>
<gene>
    <name evidence="1" type="primary">apt</name>
    <name type="ordered locus">PSHAa1200</name>
</gene>
<keyword id="KW-0963">Cytoplasm</keyword>
<keyword id="KW-0328">Glycosyltransferase</keyword>
<keyword id="KW-0660">Purine salvage</keyword>
<keyword id="KW-1185">Reference proteome</keyword>
<keyword id="KW-0808">Transferase</keyword>
<accession>Q3IKN5</accession>
<protein>
    <recommendedName>
        <fullName evidence="1">Adenine phosphoribosyltransferase</fullName>
        <shortName evidence="1">APRT</shortName>
        <ecNumber evidence="1">2.4.2.7</ecNumber>
    </recommendedName>
</protein>